<name>SYY_AROAE</name>
<feature type="chain" id="PRO_0000236691" description="Tyrosine--tRNA ligase">
    <location>
        <begin position="1"/>
        <end position="399"/>
    </location>
</feature>
<feature type="domain" description="S4 RNA-binding" evidence="1">
    <location>
        <begin position="337"/>
        <end position="398"/>
    </location>
</feature>
<feature type="short sequence motif" description="'HIGH' region">
    <location>
        <begin position="42"/>
        <end position="51"/>
    </location>
</feature>
<feature type="short sequence motif" description="'KMSKS' region">
    <location>
        <begin position="226"/>
        <end position="230"/>
    </location>
</feature>
<feature type="binding site" evidence="1">
    <location>
        <position position="229"/>
    </location>
    <ligand>
        <name>ATP</name>
        <dbReference type="ChEBI" id="CHEBI:30616"/>
    </ligand>
</feature>
<gene>
    <name evidence="1" type="primary">tyrS</name>
    <name type="ordered locus">AZOSEA04970</name>
    <name type="ORF">ebA931</name>
</gene>
<comment type="function">
    <text evidence="1">Catalyzes the attachment of tyrosine to tRNA(Tyr) in a two-step reaction: tyrosine is first activated by ATP to form Tyr-AMP and then transferred to the acceptor end of tRNA(Tyr).</text>
</comment>
<comment type="catalytic activity">
    <reaction evidence="1">
        <text>tRNA(Tyr) + L-tyrosine + ATP = L-tyrosyl-tRNA(Tyr) + AMP + diphosphate + H(+)</text>
        <dbReference type="Rhea" id="RHEA:10220"/>
        <dbReference type="Rhea" id="RHEA-COMP:9706"/>
        <dbReference type="Rhea" id="RHEA-COMP:9707"/>
        <dbReference type="ChEBI" id="CHEBI:15378"/>
        <dbReference type="ChEBI" id="CHEBI:30616"/>
        <dbReference type="ChEBI" id="CHEBI:33019"/>
        <dbReference type="ChEBI" id="CHEBI:58315"/>
        <dbReference type="ChEBI" id="CHEBI:78442"/>
        <dbReference type="ChEBI" id="CHEBI:78536"/>
        <dbReference type="ChEBI" id="CHEBI:456215"/>
        <dbReference type="EC" id="6.1.1.1"/>
    </reaction>
</comment>
<comment type="subunit">
    <text evidence="1">Homodimer.</text>
</comment>
<comment type="subcellular location">
    <subcellularLocation>
        <location evidence="1">Cytoplasm</location>
    </subcellularLocation>
</comment>
<comment type="similarity">
    <text evidence="1">Belongs to the class-I aminoacyl-tRNA synthetase family. TyrS type 2 subfamily.</text>
</comment>
<keyword id="KW-0030">Aminoacyl-tRNA synthetase</keyword>
<keyword id="KW-0067">ATP-binding</keyword>
<keyword id="KW-0963">Cytoplasm</keyword>
<keyword id="KW-0436">Ligase</keyword>
<keyword id="KW-0547">Nucleotide-binding</keyword>
<keyword id="KW-0648">Protein biosynthesis</keyword>
<keyword id="KW-1185">Reference proteome</keyword>
<keyword id="KW-0694">RNA-binding</keyword>
<accession>Q5P7U2</accession>
<organism>
    <name type="scientific">Aromatoleum aromaticum (strain DSM 19018 / LMG 30748 / EbN1)</name>
    <name type="common">Azoarcus sp. (strain EbN1)</name>
    <dbReference type="NCBI Taxonomy" id="76114"/>
    <lineage>
        <taxon>Bacteria</taxon>
        <taxon>Pseudomonadati</taxon>
        <taxon>Pseudomonadota</taxon>
        <taxon>Betaproteobacteria</taxon>
        <taxon>Rhodocyclales</taxon>
        <taxon>Rhodocyclaceae</taxon>
        <taxon>Aromatoleum</taxon>
    </lineage>
</organism>
<proteinExistence type="inferred from homology"/>
<reference key="1">
    <citation type="journal article" date="2005" name="Arch. Microbiol.">
        <title>The genome sequence of an anaerobic aromatic-degrading denitrifying bacterium, strain EbN1.</title>
        <authorList>
            <person name="Rabus R."/>
            <person name="Kube M."/>
            <person name="Heider J."/>
            <person name="Beck A."/>
            <person name="Heitmann K."/>
            <person name="Widdel F."/>
            <person name="Reinhardt R."/>
        </authorList>
    </citation>
    <scope>NUCLEOTIDE SEQUENCE [LARGE SCALE GENOMIC DNA]</scope>
    <source>
        <strain>DSM 19018 / LMG 30748 / EbN1</strain>
    </source>
</reference>
<dbReference type="EC" id="6.1.1.1" evidence="1"/>
<dbReference type="EMBL" id="CR555306">
    <property type="protein sequence ID" value="CAI06619.1"/>
    <property type="molecule type" value="Genomic_DNA"/>
</dbReference>
<dbReference type="RefSeq" id="WP_011236349.1">
    <property type="nucleotide sequence ID" value="NC_006513.1"/>
</dbReference>
<dbReference type="SMR" id="Q5P7U2"/>
<dbReference type="STRING" id="76114.ebA931"/>
<dbReference type="KEGG" id="eba:ebA931"/>
<dbReference type="eggNOG" id="COG0162">
    <property type="taxonomic scope" value="Bacteria"/>
</dbReference>
<dbReference type="HOGENOM" id="CLU_024003_5_0_4"/>
<dbReference type="OrthoDB" id="9804243at2"/>
<dbReference type="Proteomes" id="UP000006552">
    <property type="component" value="Chromosome"/>
</dbReference>
<dbReference type="GO" id="GO:0005829">
    <property type="term" value="C:cytosol"/>
    <property type="evidence" value="ECO:0007669"/>
    <property type="project" value="TreeGrafter"/>
</dbReference>
<dbReference type="GO" id="GO:0005524">
    <property type="term" value="F:ATP binding"/>
    <property type="evidence" value="ECO:0007669"/>
    <property type="project" value="UniProtKB-UniRule"/>
</dbReference>
<dbReference type="GO" id="GO:0003723">
    <property type="term" value="F:RNA binding"/>
    <property type="evidence" value="ECO:0007669"/>
    <property type="project" value="UniProtKB-KW"/>
</dbReference>
<dbReference type="GO" id="GO:0004831">
    <property type="term" value="F:tyrosine-tRNA ligase activity"/>
    <property type="evidence" value="ECO:0007669"/>
    <property type="project" value="UniProtKB-UniRule"/>
</dbReference>
<dbReference type="GO" id="GO:0006437">
    <property type="term" value="P:tyrosyl-tRNA aminoacylation"/>
    <property type="evidence" value="ECO:0007669"/>
    <property type="project" value="UniProtKB-UniRule"/>
</dbReference>
<dbReference type="CDD" id="cd00165">
    <property type="entry name" value="S4"/>
    <property type="match status" value="1"/>
</dbReference>
<dbReference type="CDD" id="cd00805">
    <property type="entry name" value="TyrRS_core"/>
    <property type="match status" value="1"/>
</dbReference>
<dbReference type="FunFam" id="1.10.240.10:FF:000006">
    <property type="entry name" value="Tyrosine--tRNA ligase"/>
    <property type="match status" value="1"/>
</dbReference>
<dbReference type="FunFam" id="3.10.290.10:FF:000022">
    <property type="entry name" value="Tyrosine--tRNA ligase"/>
    <property type="match status" value="1"/>
</dbReference>
<dbReference type="FunFam" id="3.40.50.620:FF:000061">
    <property type="entry name" value="Tyrosine--tRNA ligase"/>
    <property type="match status" value="1"/>
</dbReference>
<dbReference type="Gene3D" id="3.40.50.620">
    <property type="entry name" value="HUPs"/>
    <property type="match status" value="1"/>
</dbReference>
<dbReference type="Gene3D" id="3.10.290.10">
    <property type="entry name" value="RNA-binding S4 domain"/>
    <property type="match status" value="1"/>
</dbReference>
<dbReference type="Gene3D" id="1.10.240.10">
    <property type="entry name" value="Tyrosyl-Transfer RNA Synthetase"/>
    <property type="match status" value="1"/>
</dbReference>
<dbReference type="HAMAP" id="MF_02007">
    <property type="entry name" value="Tyr_tRNA_synth_type2"/>
    <property type="match status" value="1"/>
</dbReference>
<dbReference type="InterPro" id="IPR001412">
    <property type="entry name" value="aa-tRNA-synth_I_CS"/>
</dbReference>
<dbReference type="InterPro" id="IPR002305">
    <property type="entry name" value="aa-tRNA-synth_Ic"/>
</dbReference>
<dbReference type="InterPro" id="IPR014729">
    <property type="entry name" value="Rossmann-like_a/b/a_fold"/>
</dbReference>
<dbReference type="InterPro" id="IPR002942">
    <property type="entry name" value="S4_RNA-bd"/>
</dbReference>
<dbReference type="InterPro" id="IPR036986">
    <property type="entry name" value="S4_RNA-bd_sf"/>
</dbReference>
<dbReference type="InterPro" id="IPR002307">
    <property type="entry name" value="Tyr-tRNA-ligase"/>
</dbReference>
<dbReference type="InterPro" id="IPR024088">
    <property type="entry name" value="Tyr-tRNA-ligase_bac-type"/>
</dbReference>
<dbReference type="InterPro" id="IPR024108">
    <property type="entry name" value="Tyr-tRNA-ligase_bac_2"/>
</dbReference>
<dbReference type="NCBIfam" id="TIGR00234">
    <property type="entry name" value="tyrS"/>
    <property type="match status" value="1"/>
</dbReference>
<dbReference type="PANTHER" id="PTHR11766:SF1">
    <property type="entry name" value="TYROSINE--TRNA LIGASE"/>
    <property type="match status" value="1"/>
</dbReference>
<dbReference type="PANTHER" id="PTHR11766">
    <property type="entry name" value="TYROSYL-TRNA SYNTHETASE"/>
    <property type="match status" value="1"/>
</dbReference>
<dbReference type="Pfam" id="PF01479">
    <property type="entry name" value="S4"/>
    <property type="match status" value="1"/>
</dbReference>
<dbReference type="Pfam" id="PF00579">
    <property type="entry name" value="tRNA-synt_1b"/>
    <property type="match status" value="1"/>
</dbReference>
<dbReference type="PRINTS" id="PR01040">
    <property type="entry name" value="TRNASYNTHTYR"/>
</dbReference>
<dbReference type="SMART" id="SM00363">
    <property type="entry name" value="S4"/>
    <property type="match status" value="1"/>
</dbReference>
<dbReference type="SUPFAM" id="SSF55174">
    <property type="entry name" value="Alpha-L RNA-binding motif"/>
    <property type="match status" value="1"/>
</dbReference>
<dbReference type="SUPFAM" id="SSF52374">
    <property type="entry name" value="Nucleotidylyl transferase"/>
    <property type="match status" value="1"/>
</dbReference>
<dbReference type="PROSITE" id="PS00178">
    <property type="entry name" value="AA_TRNA_LIGASE_I"/>
    <property type="match status" value="1"/>
</dbReference>
<dbReference type="PROSITE" id="PS50889">
    <property type="entry name" value="S4"/>
    <property type="match status" value="1"/>
</dbReference>
<evidence type="ECO:0000255" key="1">
    <source>
        <dbReference type="HAMAP-Rule" id="MF_02007"/>
    </source>
</evidence>
<sequence>MTDVQAALELIKRGAEELLVEAELVEKLESDRPLRVKAGFDPTAPDLHLGHTVLLNKLRHFQELGHQVMFLVGDFTAMIGDPSGKNATRPPLSREQILENARTYQEQVFKILDPDKTEICFNSSWMESLGTAGMIRLASRYTVARMLERDDFAKRYAGGQAIAIHEFLYPLCQGYDSVAMRADVELGGTDQKFNLLVGRELQKHDRQAPQCVLMMPLLEGLDGVNKMSKSLGNYIGITEAPREIFGKIMSISDSLMWRYFDLLSFHPAVEIARYRAEVEGGRNPRELKVLLAQEIVARFHSHAAAEDALADFEARFQRGVLPDDIPEVNVVVGDGGLPVFQVVKQAGLTGSTSEALRMIEQGAVRLNGERVEDKGLVLQRDQTVVLQVGKRKFASVVLN</sequence>
<protein>
    <recommendedName>
        <fullName evidence="1">Tyrosine--tRNA ligase</fullName>
        <ecNumber evidence="1">6.1.1.1</ecNumber>
    </recommendedName>
    <alternativeName>
        <fullName evidence="1">Tyrosyl-tRNA synthetase</fullName>
        <shortName evidence="1">TyrRS</shortName>
    </alternativeName>
</protein>